<reference key="1">
    <citation type="submission" date="2007-03" db="EMBL/GenBank/DDBJ databases">
        <title>Complete sequence of chromosome 1 of Burkholderia vietnamiensis G4.</title>
        <authorList>
            <consortium name="US DOE Joint Genome Institute"/>
            <person name="Copeland A."/>
            <person name="Lucas S."/>
            <person name="Lapidus A."/>
            <person name="Barry K."/>
            <person name="Detter J.C."/>
            <person name="Glavina del Rio T."/>
            <person name="Hammon N."/>
            <person name="Israni S."/>
            <person name="Dalin E."/>
            <person name="Tice H."/>
            <person name="Pitluck S."/>
            <person name="Chain P."/>
            <person name="Malfatti S."/>
            <person name="Shin M."/>
            <person name="Vergez L."/>
            <person name="Schmutz J."/>
            <person name="Larimer F."/>
            <person name="Land M."/>
            <person name="Hauser L."/>
            <person name="Kyrpides N."/>
            <person name="Tiedje J."/>
            <person name="Richardson P."/>
        </authorList>
    </citation>
    <scope>NUCLEOTIDE SEQUENCE [LARGE SCALE GENOMIC DNA]</scope>
    <source>
        <strain>G4 / LMG 22486</strain>
    </source>
</reference>
<name>QUEF_BURVG</name>
<proteinExistence type="inferred from homology"/>
<comment type="function">
    <text evidence="1">Catalyzes the NADPH-dependent reduction of 7-cyano-7-deazaguanine (preQ0) to 7-aminomethyl-7-deazaguanine (preQ1).</text>
</comment>
<comment type="catalytic activity">
    <reaction evidence="1">
        <text>7-aminomethyl-7-carbaguanine + 2 NADP(+) = 7-cyano-7-deazaguanine + 2 NADPH + 3 H(+)</text>
        <dbReference type="Rhea" id="RHEA:13409"/>
        <dbReference type="ChEBI" id="CHEBI:15378"/>
        <dbReference type="ChEBI" id="CHEBI:45075"/>
        <dbReference type="ChEBI" id="CHEBI:57783"/>
        <dbReference type="ChEBI" id="CHEBI:58349"/>
        <dbReference type="ChEBI" id="CHEBI:58703"/>
        <dbReference type="EC" id="1.7.1.13"/>
    </reaction>
</comment>
<comment type="pathway">
    <text evidence="1">tRNA modification; tRNA-queuosine biosynthesis.</text>
</comment>
<comment type="subunit">
    <text evidence="1">Homodimer.</text>
</comment>
<comment type="subcellular location">
    <subcellularLocation>
        <location evidence="1">Cytoplasm</location>
    </subcellularLocation>
</comment>
<comment type="similarity">
    <text evidence="1">Belongs to the GTP cyclohydrolase I family. QueF type 2 subfamily.</text>
</comment>
<sequence>MNPEHSPLGKATVYAAQYDASLLFPIPRAGAREQLGIAAALPFFGTDIWNAYELSWLNARGKPQLAVATFYVPAESPNIVESKSFKLYLGSFAQSKFDSVDAVRDVLKRDVSAACGASVSVQLVSPHDFGKLQMEELDGLSLDRLDLDTDVYEPDPSLLSAAADEAPVEETLVSDLLRSNCPVTGQPDWGSVQIHYVGPQIDHAGLLRYIISFRNHTGFHEQCVERIFLDILQACKPLKLAVYARYTRRGGLDINPFRTNYNQSMPDNARTARQ</sequence>
<dbReference type="EC" id="1.7.1.13" evidence="1"/>
<dbReference type="EMBL" id="CP000614">
    <property type="protein sequence ID" value="ABO55834.1"/>
    <property type="molecule type" value="Genomic_DNA"/>
</dbReference>
<dbReference type="SMR" id="A4JHT1"/>
<dbReference type="KEGG" id="bvi:Bcep1808_2843"/>
<dbReference type="eggNOG" id="COG0780">
    <property type="taxonomic scope" value="Bacteria"/>
</dbReference>
<dbReference type="eggNOG" id="COG2904">
    <property type="taxonomic scope" value="Bacteria"/>
</dbReference>
<dbReference type="HOGENOM" id="CLU_054738_0_0_4"/>
<dbReference type="UniPathway" id="UPA00392"/>
<dbReference type="Proteomes" id="UP000002287">
    <property type="component" value="Chromosome 1"/>
</dbReference>
<dbReference type="GO" id="GO:0005737">
    <property type="term" value="C:cytoplasm"/>
    <property type="evidence" value="ECO:0007669"/>
    <property type="project" value="UniProtKB-SubCell"/>
</dbReference>
<dbReference type="GO" id="GO:0033739">
    <property type="term" value="F:preQ1 synthase activity"/>
    <property type="evidence" value="ECO:0007669"/>
    <property type="project" value="UniProtKB-UniRule"/>
</dbReference>
<dbReference type="GO" id="GO:0008616">
    <property type="term" value="P:queuosine biosynthetic process"/>
    <property type="evidence" value="ECO:0007669"/>
    <property type="project" value="UniProtKB-UniRule"/>
</dbReference>
<dbReference type="GO" id="GO:0006400">
    <property type="term" value="P:tRNA modification"/>
    <property type="evidence" value="ECO:0007669"/>
    <property type="project" value="UniProtKB-UniRule"/>
</dbReference>
<dbReference type="Gene3D" id="3.30.1130.10">
    <property type="match status" value="2"/>
</dbReference>
<dbReference type="HAMAP" id="MF_00817">
    <property type="entry name" value="QueF_type2"/>
    <property type="match status" value="1"/>
</dbReference>
<dbReference type="InterPro" id="IPR043133">
    <property type="entry name" value="GTP-CH-I_C/QueF"/>
</dbReference>
<dbReference type="InterPro" id="IPR050084">
    <property type="entry name" value="NADPH_dep_7-cyano-7-deazaG_red"/>
</dbReference>
<dbReference type="InterPro" id="IPR029500">
    <property type="entry name" value="QueF"/>
</dbReference>
<dbReference type="InterPro" id="IPR029139">
    <property type="entry name" value="QueF_N"/>
</dbReference>
<dbReference type="InterPro" id="IPR016428">
    <property type="entry name" value="QueF_type2"/>
</dbReference>
<dbReference type="NCBIfam" id="TIGR03138">
    <property type="entry name" value="QueF"/>
    <property type="match status" value="1"/>
</dbReference>
<dbReference type="PANTHER" id="PTHR34354">
    <property type="entry name" value="NADPH-DEPENDENT 7-CYANO-7-DEAZAGUANINE REDUCTASE"/>
    <property type="match status" value="1"/>
</dbReference>
<dbReference type="PANTHER" id="PTHR34354:SF1">
    <property type="entry name" value="NADPH-DEPENDENT 7-CYANO-7-DEAZAGUANINE REDUCTASE"/>
    <property type="match status" value="1"/>
</dbReference>
<dbReference type="Pfam" id="PF14489">
    <property type="entry name" value="QueF"/>
    <property type="match status" value="1"/>
</dbReference>
<dbReference type="Pfam" id="PF14819">
    <property type="entry name" value="QueF_N"/>
    <property type="match status" value="1"/>
</dbReference>
<dbReference type="PIRSF" id="PIRSF004750">
    <property type="entry name" value="Nitrile_oxidored_YqcD_prd"/>
    <property type="match status" value="1"/>
</dbReference>
<dbReference type="SUPFAM" id="SSF55620">
    <property type="entry name" value="Tetrahydrobiopterin biosynthesis enzymes-like"/>
    <property type="match status" value="1"/>
</dbReference>
<keyword id="KW-0963">Cytoplasm</keyword>
<keyword id="KW-0521">NADP</keyword>
<keyword id="KW-0560">Oxidoreductase</keyword>
<keyword id="KW-0671">Queuosine biosynthesis</keyword>
<organism>
    <name type="scientific">Burkholderia vietnamiensis (strain G4 / LMG 22486)</name>
    <name type="common">Burkholderia cepacia (strain R1808)</name>
    <dbReference type="NCBI Taxonomy" id="269482"/>
    <lineage>
        <taxon>Bacteria</taxon>
        <taxon>Pseudomonadati</taxon>
        <taxon>Pseudomonadota</taxon>
        <taxon>Betaproteobacteria</taxon>
        <taxon>Burkholderiales</taxon>
        <taxon>Burkholderiaceae</taxon>
        <taxon>Burkholderia</taxon>
        <taxon>Burkholderia cepacia complex</taxon>
    </lineage>
</organism>
<evidence type="ECO:0000255" key="1">
    <source>
        <dbReference type="HAMAP-Rule" id="MF_00817"/>
    </source>
</evidence>
<accession>A4JHT1</accession>
<feature type="chain" id="PRO_1000062335" description="NADPH-dependent 7-cyano-7-deazaguanine reductase">
    <location>
        <begin position="1"/>
        <end position="274"/>
    </location>
</feature>
<feature type="active site" description="Thioimide intermediate" evidence="1">
    <location>
        <position position="181"/>
    </location>
</feature>
<feature type="active site" description="Proton donor" evidence="1">
    <location>
        <position position="188"/>
    </location>
</feature>
<feature type="binding site" evidence="1">
    <location>
        <begin position="80"/>
        <end position="82"/>
    </location>
    <ligand>
        <name>substrate</name>
    </ligand>
</feature>
<feature type="binding site" evidence="1">
    <location>
        <begin position="82"/>
        <end position="83"/>
    </location>
    <ligand>
        <name>NADPH</name>
        <dbReference type="ChEBI" id="CHEBI:57783"/>
    </ligand>
</feature>
<feature type="binding site" evidence="1">
    <location>
        <begin position="220"/>
        <end position="221"/>
    </location>
    <ligand>
        <name>substrate</name>
    </ligand>
</feature>
<feature type="binding site" evidence="1">
    <location>
        <begin position="249"/>
        <end position="250"/>
    </location>
    <ligand>
        <name>NADPH</name>
        <dbReference type="ChEBI" id="CHEBI:57783"/>
    </ligand>
</feature>
<gene>
    <name evidence="1" type="primary">queF</name>
    <name type="ordered locus">Bcep1808_2843</name>
</gene>
<protein>
    <recommendedName>
        <fullName evidence="1">NADPH-dependent 7-cyano-7-deazaguanine reductase</fullName>
        <ecNumber evidence="1">1.7.1.13</ecNumber>
    </recommendedName>
    <alternativeName>
        <fullName evidence="1">7-cyano-7-carbaguanine reductase</fullName>
    </alternativeName>
    <alternativeName>
        <fullName evidence="1">NADPH-dependent nitrile oxidoreductase</fullName>
    </alternativeName>
    <alternativeName>
        <fullName evidence="1">PreQ(0) reductase</fullName>
    </alternativeName>
</protein>